<name>IF1C_ACOCL</name>
<feature type="chain" id="PRO_0000226949" description="Translation initiation factor IF-1, chloroplastic">
    <location>
        <begin position="1"/>
        <end position="77"/>
    </location>
</feature>
<feature type="domain" description="S1-like" evidence="1">
    <location>
        <begin position="1"/>
        <end position="71"/>
    </location>
</feature>
<keyword id="KW-0150">Chloroplast</keyword>
<keyword id="KW-0396">Initiation factor</keyword>
<keyword id="KW-0934">Plastid</keyword>
<keyword id="KW-0648">Protein biosynthesis</keyword>
<keyword id="KW-0694">RNA-binding</keyword>
<keyword id="KW-0699">rRNA-binding</keyword>
<organism>
    <name type="scientific">Acorus calamus</name>
    <name type="common">Sweet flag</name>
    <dbReference type="NCBI Taxonomy" id="4465"/>
    <lineage>
        <taxon>Eukaryota</taxon>
        <taxon>Viridiplantae</taxon>
        <taxon>Streptophyta</taxon>
        <taxon>Embryophyta</taxon>
        <taxon>Tracheophyta</taxon>
        <taxon>Spermatophyta</taxon>
        <taxon>Magnoliopsida</taxon>
        <taxon>Liliopsida</taxon>
        <taxon>Acoraceae</taxon>
        <taxon>Acorus</taxon>
    </lineage>
</organism>
<protein>
    <recommendedName>
        <fullName evidence="1">Translation initiation factor IF-1, chloroplastic</fullName>
    </recommendedName>
</protein>
<geneLocation type="chloroplast"/>
<gene>
    <name evidence="1" type="primary">infA</name>
</gene>
<proteinExistence type="inferred from homology"/>
<evidence type="ECO:0000255" key="1">
    <source>
        <dbReference type="HAMAP-Rule" id="MF_00075"/>
    </source>
</evidence>
<reference key="1">
    <citation type="journal article" date="2005" name="Mol. Biol. Evol.">
        <title>Analysis of Acorus calamus chloroplast genome and its phylogenetic implications.</title>
        <authorList>
            <person name="Goremykin V.V."/>
            <person name="Holland B."/>
            <person name="Hirsch-Ernst K.I."/>
            <person name="Hellwig F.H."/>
        </authorList>
    </citation>
    <scope>NUCLEOTIDE SEQUENCE [LARGE SCALE GENOMIC DNA]</scope>
</reference>
<sequence length="77" mass="9074">MKEQKLIHEGLITESLPNGMFWVRLDNEDLVLGYISGRIRRSSIRILPGDRVKIEVSRYDSTRGRIIYRLRNKDSNE</sequence>
<comment type="function">
    <text evidence="1">One of the essential components for the initiation of protein synthesis. Stabilizes the binding of IF-2 and IF-3 on the 30S subunit to which N-formylmethionyl-tRNA(fMet) subsequently binds. Helps modulate mRNA selection, yielding the 30S pre-initiation complex (PIC). Upon addition of the 50S ribosomal subunit IF-1, IF-2 and IF-3 are released leaving the mature 70S translation initiation complex.</text>
</comment>
<comment type="subunit">
    <text evidence="1">Component of the 30S ribosomal translation pre-initiation complex which assembles on the 30S ribosome in the order IF-2 and IF-3, IF-1 and N-formylmethionyl-tRNA(fMet); mRNA recruitment can occur at any time during PIC assembly.</text>
</comment>
<comment type="subcellular location">
    <subcellularLocation>
        <location evidence="1">Plastid</location>
        <location evidence="1">Chloroplast</location>
    </subcellularLocation>
</comment>
<comment type="similarity">
    <text evidence="1">Belongs to the IF-1 family.</text>
</comment>
<accession>Q3V4Z9</accession>
<dbReference type="EMBL" id="AJ879453">
    <property type="protein sequence ID" value="CAI53829.1"/>
    <property type="molecule type" value="Genomic_DNA"/>
</dbReference>
<dbReference type="RefSeq" id="YP_319798.1">
    <property type="nucleotide sequence ID" value="NC_007407.1"/>
</dbReference>
<dbReference type="SMR" id="Q3V4Z9"/>
<dbReference type="GeneID" id="3677513"/>
<dbReference type="GO" id="GO:0009507">
    <property type="term" value="C:chloroplast"/>
    <property type="evidence" value="ECO:0007669"/>
    <property type="project" value="UniProtKB-SubCell"/>
</dbReference>
<dbReference type="GO" id="GO:0005829">
    <property type="term" value="C:cytosol"/>
    <property type="evidence" value="ECO:0007669"/>
    <property type="project" value="TreeGrafter"/>
</dbReference>
<dbReference type="GO" id="GO:0043022">
    <property type="term" value="F:ribosome binding"/>
    <property type="evidence" value="ECO:0007669"/>
    <property type="project" value="UniProtKB-UniRule"/>
</dbReference>
<dbReference type="GO" id="GO:0019843">
    <property type="term" value="F:rRNA binding"/>
    <property type="evidence" value="ECO:0007669"/>
    <property type="project" value="UniProtKB-UniRule"/>
</dbReference>
<dbReference type="GO" id="GO:0003743">
    <property type="term" value="F:translation initiation factor activity"/>
    <property type="evidence" value="ECO:0007669"/>
    <property type="project" value="UniProtKB-UniRule"/>
</dbReference>
<dbReference type="CDD" id="cd04451">
    <property type="entry name" value="S1_IF1"/>
    <property type="match status" value="1"/>
</dbReference>
<dbReference type="FunFam" id="2.40.50.140:FF:000019">
    <property type="entry name" value="Translation initiation factor IF-1, chloroplastic"/>
    <property type="match status" value="1"/>
</dbReference>
<dbReference type="Gene3D" id="2.40.50.140">
    <property type="entry name" value="Nucleic acid-binding proteins"/>
    <property type="match status" value="1"/>
</dbReference>
<dbReference type="HAMAP" id="MF_00075">
    <property type="entry name" value="IF_1"/>
    <property type="match status" value="1"/>
</dbReference>
<dbReference type="InterPro" id="IPR012340">
    <property type="entry name" value="NA-bd_OB-fold"/>
</dbReference>
<dbReference type="InterPro" id="IPR006196">
    <property type="entry name" value="RNA-binding_domain_S1_IF1"/>
</dbReference>
<dbReference type="InterPro" id="IPR003029">
    <property type="entry name" value="S1_domain"/>
</dbReference>
<dbReference type="InterPro" id="IPR004368">
    <property type="entry name" value="TIF_IF1"/>
</dbReference>
<dbReference type="NCBIfam" id="TIGR00008">
    <property type="entry name" value="infA"/>
    <property type="match status" value="1"/>
</dbReference>
<dbReference type="PANTHER" id="PTHR33370">
    <property type="entry name" value="TRANSLATION INITIATION FACTOR IF-1, CHLOROPLASTIC"/>
    <property type="match status" value="1"/>
</dbReference>
<dbReference type="PANTHER" id="PTHR33370:SF1">
    <property type="entry name" value="TRANSLATION INITIATION FACTOR IF-1, CHLOROPLASTIC"/>
    <property type="match status" value="1"/>
</dbReference>
<dbReference type="Pfam" id="PF01176">
    <property type="entry name" value="eIF-1a"/>
    <property type="match status" value="1"/>
</dbReference>
<dbReference type="SMART" id="SM00316">
    <property type="entry name" value="S1"/>
    <property type="match status" value="1"/>
</dbReference>
<dbReference type="SUPFAM" id="SSF50249">
    <property type="entry name" value="Nucleic acid-binding proteins"/>
    <property type="match status" value="1"/>
</dbReference>
<dbReference type="PROSITE" id="PS50832">
    <property type="entry name" value="S1_IF1_TYPE"/>
    <property type="match status" value="1"/>
</dbReference>